<accession>B0BM40</accession>
<reference key="1">
    <citation type="submission" date="2008-01" db="EMBL/GenBank/DDBJ databases">
        <authorList>
            <consortium name="NIH - Xenopus Gene Collection (XGC) project"/>
        </authorList>
    </citation>
    <scope>NUCLEOTIDE SEQUENCE [LARGE SCALE MRNA]</scope>
    <source>
        <tissue>Embryo</tissue>
    </source>
</reference>
<name>TPIS_XENTR</name>
<sequence>MSSRKFFVGGNWKMNGDKKSLTELINTLNSGKISADTEVVCGAPTIYLDFARQKLDAKFAVSAQNCYKVAKGAFTGEISPAMIKDCGATWVILGHSERRHVFGESDELIGQKVAHALSENVGVIGCIGEKLDQREAGITEKVVFEQTKAIADNVKDWSKVVLAYEPVWAIGTGKTATPEQAQEVHKKLREWLKTNVSEDVAKSVRIIYGGSVTGGTCKELGAQPDIDGFLVGGASLKPEFIDIINAKQ</sequence>
<gene>
    <name type="primary">tpi1</name>
    <name type="synonym">tpi</name>
</gene>
<protein>
    <recommendedName>
        <fullName>Triosephosphate isomerase</fullName>
        <shortName>TIM</shortName>
        <ecNumber evidence="3">5.3.1.1</ecNumber>
    </recommendedName>
    <alternativeName>
        <fullName evidence="2">Methylglyoxal synthase</fullName>
        <ecNumber evidence="2">4.2.3.3</ecNumber>
    </alternativeName>
    <alternativeName>
        <fullName>Triose-phosphate isomerase</fullName>
    </alternativeName>
</protein>
<keyword id="KW-0963">Cytoplasm</keyword>
<keyword id="KW-0312">Gluconeogenesis</keyword>
<keyword id="KW-0324">Glycolysis</keyword>
<keyword id="KW-0413">Isomerase</keyword>
<keyword id="KW-0456">Lyase</keyword>
<keyword id="KW-1185">Reference proteome</keyword>
<dbReference type="EC" id="5.3.1.1" evidence="3"/>
<dbReference type="EC" id="4.2.3.3" evidence="2"/>
<dbReference type="EMBL" id="BC158276">
    <property type="protein sequence ID" value="AAI58277.1"/>
    <property type="molecule type" value="mRNA"/>
</dbReference>
<dbReference type="RefSeq" id="NP_001107706.1">
    <property type="nucleotide sequence ID" value="NM_001114234.1"/>
</dbReference>
<dbReference type="SMR" id="B0BM40"/>
<dbReference type="FunCoup" id="B0BM40">
    <property type="interactions" value="1349"/>
</dbReference>
<dbReference type="STRING" id="8364.ENSXETP00000017944"/>
<dbReference type="PaxDb" id="8364-ENSXETP00000051603"/>
<dbReference type="GeneID" id="100038162"/>
<dbReference type="KEGG" id="xtr:100038162"/>
<dbReference type="AGR" id="Xenbase:XB-GENE-494465"/>
<dbReference type="CTD" id="7167"/>
<dbReference type="Xenbase" id="XB-GENE-494465">
    <property type="gene designation" value="tpi1"/>
</dbReference>
<dbReference type="eggNOG" id="KOG1643">
    <property type="taxonomic scope" value="Eukaryota"/>
</dbReference>
<dbReference type="HOGENOM" id="CLU_024251_2_0_1"/>
<dbReference type="InParanoid" id="B0BM40"/>
<dbReference type="OMA" id="NWKMHMT"/>
<dbReference type="OrthoDB" id="6715177at2759"/>
<dbReference type="PhylomeDB" id="B0BM40"/>
<dbReference type="TreeFam" id="TF300829"/>
<dbReference type="Reactome" id="R-XTR-70171">
    <property type="pathway name" value="Glycolysis"/>
</dbReference>
<dbReference type="Reactome" id="R-XTR-70263">
    <property type="pathway name" value="Gluconeogenesis"/>
</dbReference>
<dbReference type="UniPathway" id="UPA00109">
    <property type="reaction ID" value="UER00189"/>
</dbReference>
<dbReference type="UniPathway" id="UPA00138"/>
<dbReference type="Proteomes" id="UP000008143">
    <property type="component" value="Chromosome 7"/>
</dbReference>
<dbReference type="Bgee" id="ENSXETG00000023924">
    <property type="expression patterns" value="Expressed in ovary and 23 other cell types or tissues"/>
</dbReference>
<dbReference type="GO" id="GO:0005737">
    <property type="term" value="C:cytoplasm"/>
    <property type="evidence" value="ECO:0007669"/>
    <property type="project" value="UniProtKB-SubCell"/>
</dbReference>
<dbReference type="GO" id="GO:0008929">
    <property type="term" value="F:methylglyoxal synthase activity"/>
    <property type="evidence" value="ECO:0000250"/>
    <property type="project" value="UniProtKB"/>
</dbReference>
<dbReference type="GO" id="GO:0042803">
    <property type="term" value="F:protein homodimerization activity"/>
    <property type="evidence" value="ECO:0000250"/>
    <property type="project" value="UniProtKB"/>
</dbReference>
<dbReference type="GO" id="GO:0004807">
    <property type="term" value="F:triose-phosphate isomerase activity"/>
    <property type="evidence" value="ECO:0000250"/>
    <property type="project" value="UniProtKB"/>
</dbReference>
<dbReference type="GO" id="GO:0006094">
    <property type="term" value="P:gluconeogenesis"/>
    <property type="evidence" value="ECO:0007669"/>
    <property type="project" value="UniProtKB-UniPathway"/>
</dbReference>
<dbReference type="GO" id="GO:0046166">
    <property type="term" value="P:glyceraldehyde-3-phosphate biosynthetic process"/>
    <property type="evidence" value="ECO:0000250"/>
    <property type="project" value="UniProtKB"/>
</dbReference>
<dbReference type="GO" id="GO:0006096">
    <property type="term" value="P:glycolytic process"/>
    <property type="evidence" value="ECO:0007669"/>
    <property type="project" value="UniProtKB-UniPathway"/>
</dbReference>
<dbReference type="GO" id="GO:0019242">
    <property type="term" value="P:methylglyoxal biosynthetic process"/>
    <property type="evidence" value="ECO:0000250"/>
    <property type="project" value="UniProtKB"/>
</dbReference>
<dbReference type="CDD" id="cd00311">
    <property type="entry name" value="TIM"/>
    <property type="match status" value="1"/>
</dbReference>
<dbReference type="FunFam" id="3.20.20.70:FF:000025">
    <property type="entry name" value="Triosephosphate isomerase"/>
    <property type="match status" value="1"/>
</dbReference>
<dbReference type="Gene3D" id="3.20.20.70">
    <property type="entry name" value="Aldolase class I"/>
    <property type="match status" value="1"/>
</dbReference>
<dbReference type="HAMAP" id="MF_00147_B">
    <property type="entry name" value="TIM_B"/>
    <property type="match status" value="1"/>
</dbReference>
<dbReference type="InterPro" id="IPR013785">
    <property type="entry name" value="Aldolase_TIM"/>
</dbReference>
<dbReference type="InterPro" id="IPR035990">
    <property type="entry name" value="TIM_sf"/>
</dbReference>
<dbReference type="InterPro" id="IPR022896">
    <property type="entry name" value="TrioseP_Isoase_bac/euk"/>
</dbReference>
<dbReference type="InterPro" id="IPR000652">
    <property type="entry name" value="Triosephosphate_isomerase"/>
</dbReference>
<dbReference type="InterPro" id="IPR020861">
    <property type="entry name" value="Triosephosphate_isomerase_AS"/>
</dbReference>
<dbReference type="NCBIfam" id="TIGR00419">
    <property type="entry name" value="tim"/>
    <property type="match status" value="1"/>
</dbReference>
<dbReference type="PANTHER" id="PTHR21139">
    <property type="entry name" value="TRIOSEPHOSPHATE ISOMERASE"/>
    <property type="match status" value="1"/>
</dbReference>
<dbReference type="PANTHER" id="PTHR21139:SF2">
    <property type="entry name" value="TRIOSEPHOSPHATE ISOMERASE"/>
    <property type="match status" value="1"/>
</dbReference>
<dbReference type="Pfam" id="PF00121">
    <property type="entry name" value="TIM"/>
    <property type="match status" value="1"/>
</dbReference>
<dbReference type="SUPFAM" id="SSF51351">
    <property type="entry name" value="Triosephosphate isomerase (TIM)"/>
    <property type="match status" value="1"/>
</dbReference>
<dbReference type="PROSITE" id="PS00171">
    <property type="entry name" value="TIM_1"/>
    <property type="match status" value="1"/>
</dbReference>
<dbReference type="PROSITE" id="PS51440">
    <property type="entry name" value="TIM_2"/>
    <property type="match status" value="1"/>
</dbReference>
<organism>
    <name type="scientific">Xenopus tropicalis</name>
    <name type="common">Western clawed frog</name>
    <name type="synonym">Silurana tropicalis</name>
    <dbReference type="NCBI Taxonomy" id="8364"/>
    <lineage>
        <taxon>Eukaryota</taxon>
        <taxon>Metazoa</taxon>
        <taxon>Chordata</taxon>
        <taxon>Craniata</taxon>
        <taxon>Vertebrata</taxon>
        <taxon>Euteleostomi</taxon>
        <taxon>Amphibia</taxon>
        <taxon>Batrachia</taxon>
        <taxon>Anura</taxon>
        <taxon>Pipoidea</taxon>
        <taxon>Pipidae</taxon>
        <taxon>Xenopodinae</taxon>
        <taxon>Xenopus</taxon>
        <taxon>Silurana</taxon>
    </lineage>
</organism>
<feature type="initiator methionine" description="Removed" evidence="1">
    <location>
        <position position="1"/>
    </location>
</feature>
<feature type="chain" id="PRO_0000345143" description="Triosephosphate isomerase">
    <location>
        <begin position="2"/>
        <end position="248"/>
    </location>
</feature>
<feature type="active site" description="Electrophile" evidence="3">
    <location>
        <position position="95"/>
    </location>
</feature>
<feature type="active site" description="Proton acceptor" evidence="3">
    <location>
        <position position="165"/>
    </location>
</feature>
<feature type="binding site" evidence="3">
    <location>
        <position position="11"/>
    </location>
    <ligand>
        <name>substrate</name>
    </ligand>
</feature>
<feature type="binding site" evidence="3">
    <location>
        <position position="13"/>
    </location>
    <ligand>
        <name>substrate</name>
    </ligand>
</feature>
<evidence type="ECO:0000250" key="1"/>
<evidence type="ECO:0000250" key="2">
    <source>
        <dbReference type="UniProtKB" id="P00939"/>
    </source>
</evidence>
<evidence type="ECO:0000255" key="3">
    <source>
        <dbReference type="PROSITE-ProRule" id="PRU10127"/>
    </source>
</evidence>
<evidence type="ECO:0000305" key="4"/>
<proteinExistence type="evidence at transcript level"/>
<comment type="function">
    <text evidence="2">Triosephosphate isomerase is an extremely efficient metabolic enzyme that catalyzes the interconversion between dihydroxyacetone phosphate (DHAP) and D-glyceraldehyde-3-phosphate (G3P) in glycolysis and gluconeogenesis.</text>
</comment>
<comment type="function">
    <text evidence="2">It is also responsible for the non-negligible production of methylglyoxal a reactive cytotoxic side-product that modifies and can alter proteins, DNA and lipids.</text>
</comment>
<comment type="catalytic activity">
    <reaction evidence="2">
        <text>dihydroxyacetone phosphate = methylglyoxal + phosphate</text>
        <dbReference type="Rhea" id="RHEA:17937"/>
        <dbReference type="ChEBI" id="CHEBI:17158"/>
        <dbReference type="ChEBI" id="CHEBI:43474"/>
        <dbReference type="ChEBI" id="CHEBI:57642"/>
        <dbReference type="EC" id="4.2.3.3"/>
    </reaction>
</comment>
<comment type="catalytic activity">
    <reaction evidence="3">
        <text>D-glyceraldehyde 3-phosphate = dihydroxyacetone phosphate</text>
        <dbReference type="Rhea" id="RHEA:18585"/>
        <dbReference type="ChEBI" id="CHEBI:57642"/>
        <dbReference type="ChEBI" id="CHEBI:59776"/>
        <dbReference type="EC" id="5.3.1.1"/>
    </reaction>
</comment>
<comment type="pathway">
    <text evidence="3">Carbohydrate degradation; glycolysis; D-glyceraldehyde 3-phosphate from glycerone phosphate: step 1/1.</text>
</comment>
<comment type="pathway">
    <text evidence="3">Carbohydrate biosynthesis; gluconeogenesis.</text>
</comment>
<comment type="subunit">
    <text evidence="3">Homodimer.</text>
</comment>
<comment type="subcellular location">
    <subcellularLocation>
        <location evidence="3">Cytoplasm</location>
    </subcellularLocation>
</comment>
<comment type="similarity">
    <text evidence="4">Belongs to the triosephosphate isomerase family.</text>
</comment>